<keyword id="KW-0687">Ribonucleoprotein</keyword>
<keyword id="KW-0689">Ribosomal protein</keyword>
<keyword id="KW-0694">RNA-binding</keyword>
<keyword id="KW-0699">rRNA-binding</keyword>
<comment type="function">
    <text evidence="1">One of the primary rRNA binding proteins, it binds directly to 16S rRNA where it helps nucleate assembly of the platform of the 30S subunit by binding and bridging several RNA helices of the 16S rRNA.</text>
</comment>
<comment type="function">
    <text evidence="1">Forms an intersubunit bridge (bridge B4) with the 23S rRNA of the 50S subunit in the ribosome.</text>
</comment>
<comment type="subunit">
    <text evidence="1">Part of the 30S ribosomal subunit. Forms a bridge to the 50S subunit in the 70S ribosome, contacting the 23S rRNA.</text>
</comment>
<comment type="similarity">
    <text evidence="1">Belongs to the universal ribosomal protein uS15 family.</text>
</comment>
<comment type="sequence caution" evidence="3">
    <conflict type="erroneous initiation">
        <sequence resource="EMBL-CDS" id="ABS40152"/>
    </conflict>
</comment>
<accession>A7GG01</accession>
<dbReference type="EMBL" id="CP000728">
    <property type="protein sequence ID" value="ABS40152.1"/>
    <property type="status" value="ALT_INIT"/>
    <property type="molecule type" value="Genomic_DNA"/>
</dbReference>
<dbReference type="RefSeq" id="WP_003388351.1">
    <property type="nucleotide sequence ID" value="NC_009699.1"/>
</dbReference>
<dbReference type="SMR" id="A7GG01"/>
<dbReference type="GeneID" id="92939166"/>
<dbReference type="KEGG" id="cbf:CLI_2469"/>
<dbReference type="HOGENOM" id="CLU_148518_0_1_9"/>
<dbReference type="Proteomes" id="UP000002410">
    <property type="component" value="Chromosome"/>
</dbReference>
<dbReference type="GO" id="GO:0022627">
    <property type="term" value="C:cytosolic small ribosomal subunit"/>
    <property type="evidence" value="ECO:0007669"/>
    <property type="project" value="TreeGrafter"/>
</dbReference>
<dbReference type="GO" id="GO:0019843">
    <property type="term" value="F:rRNA binding"/>
    <property type="evidence" value="ECO:0007669"/>
    <property type="project" value="UniProtKB-UniRule"/>
</dbReference>
<dbReference type="GO" id="GO:0003735">
    <property type="term" value="F:structural constituent of ribosome"/>
    <property type="evidence" value="ECO:0007669"/>
    <property type="project" value="InterPro"/>
</dbReference>
<dbReference type="GO" id="GO:0006412">
    <property type="term" value="P:translation"/>
    <property type="evidence" value="ECO:0007669"/>
    <property type="project" value="UniProtKB-UniRule"/>
</dbReference>
<dbReference type="CDD" id="cd00353">
    <property type="entry name" value="Ribosomal_S15p_S13e"/>
    <property type="match status" value="1"/>
</dbReference>
<dbReference type="FunFam" id="1.10.287.10:FF:000002">
    <property type="entry name" value="30S ribosomal protein S15"/>
    <property type="match status" value="1"/>
</dbReference>
<dbReference type="Gene3D" id="6.10.250.3130">
    <property type="match status" value="1"/>
</dbReference>
<dbReference type="Gene3D" id="1.10.287.10">
    <property type="entry name" value="S15/NS1, RNA-binding"/>
    <property type="match status" value="1"/>
</dbReference>
<dbReference type="HAMAP" id="MF_01343_B">
    <property type="entry name" value="Ribosomal_uS15_B"/>
    <property type="match status" value="1"/>
</dbReference>
<dbReference type="InterPro" id="IPR000589">
    <property type="entry name" value="Ribosomal_uS15"/>
</dbReference>
<dbReference type="InterPro" id="IPR005290">
    <property type="entry name" value="Ribosomal_uS15_bac-type"/>
</dbReference>
<dbReference type="InterPro" id="IPR009068">
    <property type="entry name" value="uS15_NS1_RNA-bd_sf"/>
</dbReference>
<dbReference type="NCBIfam" id="TIGR00952">
    <property type="entry name" value="S15_bact"/>
    <property type="match status" value="1"/>
</dbReference>
<dbReference type="PANTHER" id="PTHR23321">
    <property type="entry name" value="RIBOSOMAL PROTEIN S15, BACTERIAL AND ORGANELLAR"/>
    <property type="match status" value="1"/>
</dbReference>
<dbReference type="PANTHER" id="PTHR23321:SF26">
    <property type="entry name" value="SMALL RIBOSOMAL SUBUNIT PROTEIN US15M"/>
    <property type="match status" value="1"/>
</dbReference>
<dbReference type="Pfam" id="PF00312">
    <property type="entry name" value="Ribosomal_S15"/>
    <property type="match status" value="1"/>
</dbReference>
<dbReference type="SMART" id="SM01387">
    <property type="entry name" value="Ribosomal_S15"/>
    <property type="match status" value="1"/>
</dbReference>
<dbReference type="SUPFAM" id="SSF47060">
    <property type="entry name" value="S15/NS1 RNA-binding domain"/>
    <property type="match status" value="1"/>
</dbReference>
<dbReference type="PROSITE" id="PS00362">
    <property type="entry name" value="RIBOSOMAL_S15"/>
    <property type="match status" value="1"/>
</dbReference>
<protein>
    <recommendedName>
        <fullName evidence="1">Small ribosomal subunit protein uS15</fullName>
    </recommendedName>
    <alternativeName>
        <fullName evidence="3">30S ribosomal protein S15</fullName>
    </alternativeName>
</protein>
<sequence>MDKAKKQELMAKHARHEGDTGSPEVQIALLTERINHLNSHLKEHKKDHHSRRGLLMMVGKRRGLLNYLMREDIERYRAIIKELGLRK</sequence>
<evidence type="ECO:0000255" key="1">
    <source>
        <dbReference type="HAMAP-Rule" id="MF_01343"/>
    </source>
</evidence>
<evidence type="ECO:0000256" key="2">
    <source>
        <dbReference type="SAM" id="MobiDB-lite"/>
    </source>
</evidence>
<evidence type="ECO:0000305" key="3"/>
<gene>
    <name evidence="1" type="primary">rpsO</name>
    <name type="ordered locus">CLI_2469</name>
</gene>
<reference key="1">
    <citation type="submission" date="2007-06" db="EMBL/GenBank/DDBJ databases">
        <authorList>
            <person name="Brinkac L.M."/>
            <person name="Daugherty S."/>
            <person name="Dodson R.J."/>
            <person name="Madupu R."/>
            <person name="Brown J.L."/>
            <person name="Bruce D."/>
            <person name="Detter C."/>
            <person name="Munk C."/>
            <person name="Smith L.A."/>
            <person name="Smith T.J."/>
            <person name="White O."/>
            <person name="Brettin T.S."/>
        </authorList>
    </citation>
    <scope>NUCLEOTIDE SEQUENCE [LARGE SCALE GENOMIC DNA]</scope>
    <source>
        <strain>Langeland / NCTC 10281 / Type F</strain>
    </source>
</reference>
<name>RS15_CLOBL</name>
<organism>
    <name type="scientific">Clostridium botulinum (strain Langeland / NCTC 10281 / Type F)</name>
    <dbReference type="NCBI Taxonomy" id="441772"/>
    <lineage>
        <taxon>Bacteria</taxon>
        <taxon>Bacillati</taxon>
        <taxon>Bacillota</taxon>
        <taxon>Clostridia</taxon>
        <taxon>Eubacteriales</taxon>
        <taxon>Clostridiaceae</taxon>
        <taxon>Clostridium</taxon>
    </lineage>
</organism>
<feature type="chain" id="PRO_0000354186" description="Small ribosomal subunit protein uS15">
    <location>
        <begin position="1"/>
        <end position="87"/>
    </location>
</feature>
<feature type="region of interest" description="Disordered" evidence="2">
    <location>
        <begin position="1"/>
        <end position="23"/>
    </location>
</feature>
<feature type="compositionally biased region" description="Basic and acidic residues" evidence="2">
    <location>
        <begin position="1"/>
        <end position="19"/>
    </location>
</feature>
<proteinExistence type="inferred from homology"/>